<accession>B1WUV7</accession>
<protein>
    <recommendedName>
        <fullName evidence="1">Holliday junction branch migration complex subunit RuvA</fullName>
    </recommendedName>
</protein>
<reference key="1">
    <citation type="journal article" date="2008" name="Proc. Natl. Acad. Sci. U.S.A.">
        <title>The genome of Cyanothece 51142, a unicellular diazotrophic cyanobacterium important in the marine nitrogen cycle.</title>
        <authorList>
            <person name="Welsh E.A."/>
            <person name="Liberton M."/>
            <person name="Stoeckel J."/>
            <person name="Loh T."/>
            <person name="Elvitigala T."/>
            <person name="Wang C."/>
            <person name="Wollam A."/>
            <person name="Fulton R.S."/>
            <person name="Clifton S.W."/>
            <person name="Jacobs J.M."/>
            <person name="Aurora R."/>
            <person name="Ghosh B.K."/>
            <person name="Sherman L.A."/>
            <person name="Smith R.D."/>
            <person name="Wilson R.K."/>
            <person name="Pakrasi H.B."/>
        </authorList>
    </citation>
    <scope>NUCLEOTIDE SEQUENCE [LARGE SCALE GENOMIC DNA]</scope>
    <source>
        <strain>ATCC 51142 / BH68</strain>
    </source>
</reference>
<comment type="function">
    <text evidence="1">The RuvA-RuvB-RuvC complex processes Holliday junction (HJ) DNA during genetic recombination and DNA repair, while the RuvA-RuvB complex plays an important role in the rescue of blocked DNA replication forks via replication fork reversal (RFR). RuvA specifically binds to HJ cruciform DNA, conferring on it an open structure. The RuvB hexamer acts as an ATP-dependent pump, pulling dsDNA into and through the RuvAB complex. HJ branch migration allows RuvC to scan DNA until it finds its consensus sequence, where it cleaves and resolves the cruciform DNA.</text>
</comment>
<comment type="subunit">
    <text evidence="1">Homotetramer. Forms an RuvA(8)-RuvB(12)-Holliday junction (HJ) complex. HJ DNA is sandwiched between 2 RuvA tetramers; dsDNA enters through RuvA and exits via RuvB. An RuvB hexamer assembles on each DNA strand where it exits the tetramer. Each RuvB hexamer is contacted by two RuvA subunits (via domain III) on 2 adjacent RuvB subunits; this complex drives branch migration. In the full resolvosome a probable DNA-RuvA(4)-RuvB(12)-RuvC(2) complex forms which resolves the HJ.</text>
</comment>
<comment type="subcellular location">
    <subcellularLocation>
        <location evidence="1">Cytoplasm</location>
    </subcellularLocation>
</comment>
<comment type="domain">
    <text evidence="1">Has three domains with a flexible linker between the domains II and III and assumes an 'L' shape. Domain III is highly mobile and contacts RuvB.</text>
</comment>
<comment type="similarity">
    <text evidence="1">Belongs to the RuvA family.</text>
</comment>
<proteinExistence type="inferred from homology"/>
<name>RUVA_CROS5</name>
<organism>
    <name type="scientific">Crocosphaera subtropica (strain ATCC 51142 / BH68)</name>
    <name type="common">Cyanothece sp. (strain ATCC 51142)</name>
    <dbReference type="NCBI Taxonomy" id="43989"/>
    <lineage>
        <taxon>Bacteria</taxon>
        <taxon>Bacillati</taxon>
        <taxon>Cyanobacteriota</taxon>
        <taxon>Cyanophyceae</taxon>
        <taxon>Oscillatoriophycideae</taxon>
        <taxon>Chroococcales</taxon>
        <taxon>Aphanothecaceae</taxon>
        <taxon>Crocosphaera</taxon>
        <taxon>Crocosphaera subtropica</taxon>
    </lineage>
</organism>
<gene>
    <name evidence="1" type="primary">ruvA</name>
    <name type="ordered locus">cce_1208</name>
</gene>
<feature type="chain" id="PRO_1000090310" description="Holliday junction branch migration complex subunit RuvA">
    <location>
        <begin position="1"/>
        <end position="212"/>
    </location>
</feature>
<feature type="region of interest" description="Domain I" evidence="1">
    <location>
        <begin position="1"/>
        <end position="70"/>
    </location>
</feature>
<feature type="region of interest" description="Domain II" evidence="1">
    <location>
        <begin position="71"/>
        <end position="149"/>
    </location>
</feature>
<feature type="region of interest" description="Flexible linker" evidence="1">
    <location>
        <begin position="150"/>
        <end position="160"/>
    </location>
</feature>
<feature type="region of interest" description="Domain III" evidence="1">
    <location>
        <begin position="160"/>
        <end position="212"/>
    </location>
</feature>
<dbReference type="EMBL" id="CP000806">
    <property type="protein sequence ID" value="ACB50558.1"/>
    <property type="molecule type" value="Genomic_DNA"/>
</dbReference>
<dbReference type="RefSeq" id="WP_009544037.1">
    <property type="nucleotide sequence ID" value="NC_010546.1"/>
</dbReference>
<dbReference type="SMR" id="B1WUV7"/>
<dbReference type="STRING" id="43989.cce_1208"/>
<dbReference type="KEGG" id="cyt:cce_1208"/>
<dbReference type="eggNOG" id="COG0632">
    <property type="taxonomic scope" value="Bacteria"/>
</dbReference>
<dbReference type="HOGENOM" id="CLU_087936_0_0_3"/>
<dbReference type="OrthoDB" id="5293449at2"/>
<dbReference type="Proteomes" id="UP000001203">
    <property type="component" value="Chromosome circular"/>
</dbReference>
<dbReference type="GO" id="GO:0005737">
    <property type="term" value="C:cytoplasm"/>
    <property type="evidence" value="ECO:0007669"/>
    <property type="project" value="UniProtKB-SubCell"/>
</dbReference>
<dbReference type="GO" id="GO:0009379">
    <property type="term" value="C:Holliday junction helicase complex"/>
    <property type="evidence" value="ECO:0007669"/>
    <property type="project" value="InterPro"/>
</dbReference>
<dbReference type="GO" id="GO:0048476">
    <property type="term" value="C:Holliday junction resolvase complex"/>
    <property type="evidence" value="ECO:0007669"/>
    <property type="project" value="UniProtKB-UniRule"/>
</dbReference>
<dbReference type="GO" id="GO:0005524">
    <property type="term" value="F:ATP binding"/>
    <property type="evidence" value="ECO:0007669"/>
    <property type="project" value="InterPro"/>
</dbReference>
<dbReference type="GO" id="GO:0000400">
    <property type="term" value="F:four-way junction DNA binding"/>
    <property type="evidence" value="ECO:0007669"/>
    <property type="project" value="UniProtKB-UniRule"/>
</dbReference>
<dbReference type="GO" id="GO:0009378">
    <property type="term" value="F:four-way junction helicase activity"/>
    <property type="evidence" value="ECO:0007669"/>
    <property type="project" value="InterPro"/>
</dbReference>
<dbReference type="GO" id="GO:0006310">
    <property type="term" value="P:DNA recombination"/>
    <property type="evidence" value="ECO:0007669"/>
    <property type="project" value="UniProtKB-UniRule"/>
</dbReference>
<dbReference type="GO" id="GO:0006281">
    <property type="term" value="P:DNA repair"/>
    <property type="evidence" value="ECO:0007669"/>
    <property type="project" value="UniProtKB-UniRule"/>
</dbReference>
<dbReference type="CDD" id="cd14332">
    <property type="entry name" value="UBA_RuvA_C"/>
    <property type="match status" value="1"/>
</dbReference>
<dbReference type="Gene3D" id="1.10.150.20">
    <property type="entry name" value="5' to 3' exonuclease, C-terminal subdomain"/>
    <property type="match status" value="1"/>
</dbReference>
<dbReference type="Gene3D" id="1.10.8.10">
    <property type="entry name" value="DNA helicase RuvA subunit, C-terminal domain"/>
    <property type="match status" value="1"/>
</dbReference>
<dbReference type="Gene3D" id="2.40.50.140">
    <property type="entry name" value="Nucleic acid-binding proteins"/>
    <property type="match status" value="1"/>
</dbReference>
<dbReference type="HAMAP" id="MF_00031">
    <property type="entry name" value="DNA_HJ_migration_RuvA"/>
    <property type="match status" value="1"/>
</dbReference>
<dbReference type="InterPro" id="IPR013849">
    <property type="entry name" value="DNA_helicase_Holl-junc_RuvA_I"/>
</dbReference>
<dbReference type="InterPro" id="IPR003583">
    <property type="entry name" value="Hlx-hairpin-Hlx_DNA-bd_motif"/>
</dbReference>
<dbReference type="InterPro" id="IPR012340">
    <property type="entry name" value="NA-bd_OB-fold"/>
</dbReference>
<dbReference type="InterPro" id="IPR000085">
    <property type="entry name" value="RuvA"/>
</dbReference>
<dbReference type="InterPro" id="IPR010994">
    <property type="entry name" value="RuvA_2-like"/>
</dbReference>
<dbReference type="InterPro" id="IPR011114">
    <property type="entry name" value="RuvA_C"/>
</dbReference>
<dbReference type="InterPro" id="IPR036267">
    <property type="entry name" value="RuvA_C_sf"/>
</dbReference>
<dbReference type="NCBIfam" id="TIGR00084">
    <property type="entry name" value="ruvA"/>
    <property type="match status" value="1"/>
</dbReference>
<dbReference type="Pfam" id="PF14520">
    <property type="entry name" value="HHH_5"/>
    <property type="match status" value="1"/>
</dbReference>
<dbReference type="Pfam" id="PF07499">
    <property type="entry name" value="RuvA_C"/>
    <property type="match status" value="1"/>
</dbReference>
<dbReference type="Pfam" id="PF01330">
    <property type="entry name" value="RuvA_N"/>
    <property type="match status" value="1"/>
</dbReference>
<dbReference type="SMART" id="SM00278">
    <property type="entry name" value="HhH1"/>
    <property type="match status" value="2"/>
</dbReference>
<dbReference type="SUPFAM" id="SSF46929">
    <property type="entry name" value="DNA helicase RuvA subunit, C-terminal domain"/>
    <property type="match status" value="1"/>
</dbReference>
<dbReference type="SUPFAM" id="SSF50249">
    <property type="entry name" value="Nucleic acid-binding proteins"/>
    <property type="match status" value="1"/>
</dbReference>
<dbReference type="SUPFAM" id="SSF47781">
    <property type="entry name" value="RuvA domain 2-like"/>
    <property type="match status" value="1"/>
</dbReference>
<sequence>MISYLKGSPIEVIKNTNNRVILVLEVNEIGYELQIPSKLGREISQEKLDTIQIFTHVQIKEDQQILYGFSTTAERELFRQLISVSGIGAQSAIALIDTLGLEELVQAIVTGNIRILSQPSGIGRKTAERIALELRTKLSQWRKMVGVTVTSSAAMPSLEILEDIEMTLLALGYTNEEINKAISTLSQDNLMLKNTNTEEWIKEAIAWLSQGT</sequence>
<keyword id="KW-0963">Cytoplasm</keyword>
<keyword id="KW-0227">DNA damage</keyword>
<keyword id="KW-0233">DNA recombination</keyword>
<keyword id="KW-0234">DNA repair</keyword>
<keyword id="KW-0238">DNA-binding</keyword>
<keyword id="KW-1185">Reference proteome</keyword>
<evidence type="ECO:0000255" key="1">
    <source>
        <dbReference type="HAMAP-Rule" id="MF_00031"/>
    </source>
</evidence>